<protein>
    <recommendedName>
        <fullName evidence="1">Proto-oncogene serine/threonine-protein kinase mos</fullName>
        <ecNumber>2.7.11.1</ecNumber>
    </recommendedName>
    <alternativeName>
        <fullName>Oocyte maturation factor mos</fullName>
    </alternativeName>
    <alternativeName>
        <fullName>Proto-oncogene c-Mos</fullName>
    </alternativeName>
</protein>
<gene>
    <name evidence="1" type="primary">MOS</name>
</gene>
<name>MOS_CHLAE</name>
<organism>
    <name type="scientific">Chlorocebus aethiops</name>
    <name type="common">Green monkey</name>
    <name type="synonym">Cercopithecus aethiops</name>
    <dbReference type="NCBI Taxonomy" id="9534"/>
    <lineage>
        <taxon>Eukaryota</taxon>
        <taxon>Metazoa</taxon>
        <taxon>Chordata</taxon>
        <taxon>Craniata</taxon>
        <taxon>Vertebrata</taxon>
        <taxon>Euteleostomi</taxon>
        <taxon>Mammalia</taxon>
        <taxon>Eutheria</taxon>
        <taxon>Euarchontoglires</taxon>
        <taxon>Primates</taxon>
        <taxon>Haplorrhini</taxon>
        <taxon>Catarrhini</taxon>
        <taxon>Cercopithecidae</taxon>
        <taxon>Cercopithecinae</taxon>
        <taxon>Chlorocebus</taxon>
    </lineage>
</organism>
<keyword id="KW-0067">ATP-binding</keyword>
<keyword id="KW-0418">Kinase</keyword>
<keyword id="KW-0547">Nucleotide-binding</keyword>
<keyword id="KW-0656">Proto-oncogene</keyword>
<keyword id="KW-0723">Serine/threonine-protein kinase</keyword>
<keyword id="KW-0808">Transferase</keyword>
<accession>P10650</accession>
<proteinExistence type="inferred from homology"/>
<evidence type="ECO:0000250" key="1">
    <source>
        <dbReference type="UniProtKB" id="P00540"/>
    </source>
</evidence>
<evidence type="ECO:0000255" key="2">
    <source>
        <dbReference type="PROSITE-ProRule" id="PRU00159"/>
    </source>
</evidence>
<evidence type="ECO:0000255" key="3">
    <source>
        <dbReference type="PROSITE-ProRule" id="PRU10027"/>
    </source>
</evidence>
<dbReference type="EC" id="2.7.11.1"/>
<dbReference type="EMBL" id="X12449">
    <property type="protein sequence ID" value="CAA30980.1"/>
    <property type="molecule type" value="Genomic_DNA"/>
</dbReference>
<dbReference type="PIR" id="A28264">
    <property type="entry name" value="TVMKMS"/>
</dbReference>
<dbReference type="SMR" id="P10650"/>
<dbReference type="GO" id="GO:0005524">
    <property type="term" value="F:ATP binding"/>
    <property type="evidence" value="ECO:0007669"/>
    <property type="project" value="UniProtKB-KW"/>
</dbReference>
<dbReference type="GO" id="GO:0004709">
    <property type="term" value="F:MAP kinase kinase kinase activity"/>
    <property type="evidence" value="ECO:0000250"/>
    <property type="project" value="UniProtKB"/>
</dbReference>
<dbReference type="GO" id="GO:0106310">
    <property type="term" value="F:protein serine kinase activity"/>
    <property type="evidence" value="ECO:0007669"/>
    <property type="project" value="RHEA"/>
</dbReference>
<dbReference type="GO" id="GO:0004674">
    <property type="term" value="F:protein serine/threonine kinase activity"/>
    <property type="evidence" value="ECO:0000250"/>
    <property type="project" value="UniProtKB"/>
</dbReference>
<dbReference type="GO" id="GO:0006325">
    <property type="term" value="P:chromatin organization"/>
    <property type="evidence" value="ECO:0000250"/>
    <property type="project" value="UniProtKB"/>
</dbReference>
<dbReference type="GO" id="GO:0051296">
    <property type="term" value="P:establishment of meiotic spindle orientation"/>
    <property type="evidence" value="ECO:0000250"/>
    <property type="project" value="UniProtKB"/>
</dbReference>
<dbReference type="GO" id="GO:0000165">
    <property type="term" value="P:MAPK cascade"/>
    <property type="evidence" value="ECO:0000250"/>
    <property type="project" value="UniProtKB"/>
</dbReference>
<dbReference type="GO" id="GO:0000212">
    <property type="term" value="P:meiotic spindle organization"/>
    <property type="evidence" value="ECO:0000250"/>
    <property type="project" value="UniProtKB"/>
</dbReference>
<dbReference type="GO" id="GO:1902103">
    <property type="term" value="P:negative regulation of metaphase/anaphase transition of meiotic cell cycle"/>
    <property type="evidence" value="ECO:0000250"/>
    <property type="project" value="UniProtKB"/>
</dbReference>
<dbReference type="GO" id="GO:0043410">
    <property type="term" value="P:positive regulation of MAPK cascade"/>
    <property type="evidence" value="ECO:0000250"/>
    <property type="project" value="UniProtKB"/>
</dbReference>
<dbReference type="CDD" id="cd13979">
    <property type="entry name" value="STKc_Mos"/>
    <property type="match status" value="1"/>
</dbReference>
<dbReference type="FunFam" id="1.10.510.10:FF:000490">
    <property type="entry name" value="Proto-oncogene serine/threonine-protein kinase mos"/>
    <property type="match status" value="1"/>
</dbReference>
<dbReference type="FunFam" id="3.30.200.20:FF:000316">
    <property type="entry name" value="Proto-oncogene serine/threonine-protein kinase mos"/>
    <property type="match status" value="1"/>
</dbReference>
<dbReference type="Gene3D" id="3.30.200.20">
    <property type="entry name" value="Phosphorylase Kinase, domain 1"/>
    <property type="match status" value="1"/>
</dbReference>
<dbReference type="Gene3D" id="1.10.510.10">
    <property type="entry name" value="Transferase(Phosphotransferase) domain 1"/>
    <property type="match status" value="1"/>
</dbReference>
<dbReference type="InterPro" id="IPR011009">
    <property type="entry name" value="Kinase-like_dom_sf"/>
</dbReference>
<dbReference type="InterPro" id="IPR000719">
    <property type="entry name" value="Prot_kinase_dom"/>
</dbReference>
<dbReference type="InterPro" id="IPR017441">
    <property type="entry name" value="Protein_kinase_ATP_BS"/>
</dbReference>
<dbReference type="InterPro" id="IPR008271">
    <property type="entry name" value="Ser/Thr_kinase_AS"/>
</dbReference>
<dbReference type="InterPro" id="IPR051681">
    <property type="entry name" value="Ser/Thr_Kinases-Pseudokinases"/>
</dbReference>
<dbReference type="PANTHER" id="PTHR44329">
    <property type="entry name" value="SERINE/THREONINE-PROTEIN KINASE TNNI3K-RELATED"/>
    <property type="match status" value="1"/>
</dbReference>
<dbReference type="PANTHER" id="PTHR44329:SF285">
    <property type="entry name" value="V-MOS MOLONEY MURINE SARCOMA VIRAL ONCO HOMOLOG"/>
    <property type="match status" value="1"/>
</dbReference>
<dbReference type="Pfam" id="PF00069">
    <property type="entry name" value="Pkinase"/>
    <property type="match status" value="1"/>
</dbReference>
<dbReference type="PIRSF" id="PIRSF000654">
    <property type="entry name" value="Integrin-linked_kinase"/>
    <property type="match status" value="1"/>
</dbReference>
<dbReference type="SMART" id="SM00220">
    <property type="entry name" value="S_TKc"/>
    <property type="match status" value="1"/>
</dbReference>
<dbReference type="SUPFAM" id="SSF56112">
    <property type="entry name" value="Protein kinase-like (PK-like)"/>
    <property type="match status" value="1"/>
</dbReference>
<dbReference type="PROSITE" id="PS00107">
    <property type="entry name" value="PROTEIN_KINASE_ATP"/>
    <property type="match status" value="1"/>
</dbReference>
<dbReference type="PROSITE" id="PS50011">
    <property type="entry name" value="PROTEIN_KINASE_DOM"/>
    <property type="match status" value="1"/>
</dbReference>
<dbReference type="PROSITE" id="PS00108">
    <property type="entry name" value="PROTEIN_KINASE_ST"/>
    <property type="match status" value="1"/>
</dbReference>
<sequence>MPSPLALRPYLPSEFSPSVDARPCSSPSELPAKLLLGATPPRAPRLPRRLAWCSIDWEQVCLLQRLGAGGFGSVYKATYHGVPVAIKQVNKCTKNRLASRRSFWAELNVARLRHDNIVRVVAASTRTPAGSNSLGTIIMEFGGNVTLHQVIYGAASHPEGDAGEPHCSTGGPLTLGKCLKYSLDVVNGLLFLHSQSIVHLDLKPANILISEQDVCKISDFGCSEKLEDLLCFQTPLYPLGGTYTHRAPELLKGEGVTPKADIYSFAITLWQMTTKQAPYSGERQHILYAVVAYDLRPSLSAAVFQDSLPGQRLGDVIRRCWRPSAAQRPSARPLLVDLTSLKAEFG</sequence>
<feature type="chain" id="PRO_0000086343" description="Proto-oncogene serine/threonine-protein kinase mos">
    <location>
        <begin position="1"/>
        <end position="346"/>
    </location>
</feature>
<feature type="domain" description="Protein kinase" evidence="2">
    <location>
        <begin position="60"/>
        <end position="341"/>
    </location>
</feature>
<feature type="active site" description="Proton acceptor" evidence="2 3">
    <location>
        <position position="201"/>
    </location>
</feature>
<feature type="binding site" evidence="2">
    <location>
        <begin position="66"/>
        <end position="74"/>
    </location>
    <ligand>
        <name>ATP</name>
        <dbReference type="ChEBI" id="CHEBI:30616"/>
    </ligand>
</feature>
<feature type="binding site" evidence="2">
    <location>
        <position position="87"/>
    </location>
    <ligand>
        <name>ATP</name>
        <dbReference type="ChEBI" id="CHEBI:30616"/>
    </ligand>
</feature>
<reference key="1">
    <citation type="journal article" date="1988" name="Oncogene">
        <title>Primate c-mos proto-oncogene structure and expression: transcription initiation both upstream and within the gene in a tissue-specific manner.</title>
        <authorList>
            <person name="Paules R.S."/>
            <person name="Propst F."/>
            <person name="Dunn K.J."/>
            <person name="Blair D.G."/>
            <person name="Kaul K."/>
            <person name="Palmer A.E."/>
            <person name="Vande Woude G.F."/>
        </authorList>
    </citation>
    <scope>NUCLEOTIDE SEQUENCE [GENOMIC DNA]</scope>
    <source>
        <tissue>Kidney</tissue>
    </source>
</reference>
<comment type="catalytic activity">
    <reaction>
        <text>L-seryl-[protein] + ATP = O-phospho-L-seryl-[protein] + ADP + H(+)</text>
        <dbReference type="Rhea" id="RHEA:17989"/>
        <dbReference type="Rhea" id="RHEA-COMP:9863"/>
        <dbReference type="Rhea" id="RHEA-COMP:11604"/>
        <dbReference type="ChEBI" id="CHEBI:15378"/>
        <dbReference type="ChEBI" id="CHEBI:29999"/>
        <dbReference type="ChEBI" id="CHEBI:30616"/>
        <dbReference type="ChEBI" id="CHEBI:83421"/>
        <dbReference type="ChEBI" id="CHEBI:456216"/>
        <dbReference type="EC" id="2.7.11.1"/>
    </reaction>
</comment>
<comment type="catalytic activity">
    <reaction>
        <text>L-threonyl-[protein] + ATP = O-phospho-L-threonyl-[protein] + ADP + H(+)</text>
        <dbReference type="Rhea" id="RHEA:46608"/>
        <dbReference type="Rhea" id="RHEA-COMP:11060"/>
        <dbReference type="Rhea" id="RHEA-COMP:11605"/>
        <dbReference type="ChEBI" id="CHEBI:15378"/>
        <dbReference type="ChEBI" id="CHEBI:30013"/>
        <dbReference type="ChEBI" id="CHEBI:30616"/>
        <dbReference type="ChEBI" id="CHEBI:61977"/>
        <dbReference type="ChEBI" id="CHEBI:456216"/>
        <dbReference type="EC" id="2.7.11.1"/>
    </reaction>
</comment>
<comment type="similarity">
    <text evidence="2">Belongs to the protein kinase superfamily. Ser/Thr protein kinase family.</text>
</comment>